<accession>Q7MSC2</accession>
<name>DAPE_WOLSU</name>
<reference key="1">
    <citation type="journal article" date="2003" name="Proc. Natl. Acad. Sci. U.S.A.">
        <title>Complete genome sequence and analysis of Wolinella succinogenes.</title>
        <authorList>
            <person name="Baar C."/>
            <person name="Eppinger M."/>
            <person name="Raddatz G."/>
            <person name="Simon J."/>
            <person name="Lanz C."/>
            <person name="Klimmek O."/>
            <person name="Nandakumar R."/>
            <person name="Gross R."/>
            <person name="Rosinus A."/>
            <person name="Keller H."/>
            <person name="Jagtap P."/>
            <person name="Linke B."/>
            <person name="Meyer F."/>
            <person name="Lederer H."/>
            <person name="Schuster S.C."/>
        </authorList>
    </citation>
    <scope>NUCLEOTIDE SEQUENCE [LARGE SCALE GENOMIC DNA]</scope>
    <source>
        <strain>ATCC 29543 / DSM 1740 / CCUG 13145 / JCM 31913 / LMG 7466 / NCTC 11488 / FDC 602W</strain>
    </source>
</reference>
<evidence type="ECO:0000255" key="1">
    <source>
        <dbReference type="HAMAP-Rule" id="MF_01690"/>
    </source>
</evidence>
<feature type="chain" id="PRO_0000375779" description="Succinyl-diaminopimelate desuccinylase">
    <location>
        <begin position="1"/>
        <end position="364"/>
    </location>
</feature>
<feature type="active site" evidence="1">
    <location>
        <position position="68"/>
    </location>
</feature>
<feature type="active site" description="Proton acceptor" evidence="1">
    <location>
        <position position="127"/>
    </location>
</feature>
<feature type="binding site" evidence="1">
    <location>
        <position position="66"/>
    </location>
    <ligand>
        <name>Zn(2+)</name>
        <dbReference type="ChEBI" id="CHEBI:29105"/>
        <label>1</label>
    </ligand>
</feature>
<feature type="binding site" evidence="1">
    <location>
        <position position="97"/>
    </location>
    <ligand>
        <name>Zn(2+)</name>
        <dbReference type="ChEBI" id="CHEBI:29105"/>
        <label>1</label>
    </ligand>
</feature>
<feature type="binding site" evidence="1">
    <location>
        <position position="97"/>
    </location>
    <ligand>
        <name>Zn(2+)</name>
        <dbReference type="ChEBI" id="CHEBI:29105"/>
        <label>2</label>
    </ligand>
</feature>
<feature type="binding site" evidence="1">
    <location>
        <position position="128"/>
    </location>
    <ligand>
        <name>Zn(2+)</name>
        <dbReference type="ChEBI" id="CHEBI:29105"/>
        <label>2</label>
    </ligand>
</feature>
<feature type="binding site" evidence="1">
    <location>
        <position position="156"/>
    </location>
    <ligand>
        <name>Zn(2+)</name>
        <dbReference type="ChEBI" id="CHEBI:29105"/>
        <label>1</label>
    </ligand>
</feature>
<feature type="binding site" evidence="1">
    <location>
        <position position="341"/>
    </location>
    <ligand>
        <name>Zn(2+)</name>
        <dbReference type="ChEBI" id="CHEBI:29105"/>
        <label>2</label>
    </ligand>
</feature>
<sequence>MKPSVIEILQKLLTYPSITPKECGIFDYVRSLLEGFEAIEVEHEGVKNLLLYRCFGEGEHWCLAGHIDVVPPGEGWSVDPFGAELKEGYLYGRGAQDMKSGVAAMISALAKIDHFPGTLSLLLTSDEEGEAKWGTQLMLEHLKERGFLPKVAIVTEPTSEERFGDTIKVGRRGSINGKLIIHGKQGHVAYPSKCLNPVELIAPRLAQIAGYNLDAGDEFFEPSKLVITDIRGGIEAVNVTPSDLKILFNVRHSTQTSAKEIEDYLHQLLQGIPYTLEIKPSSKPFLTSRESVVVKRVSEAVKRVMGVAPKLSTGGGTSDARYFAQFGVEVVECGVVNDRIHALDERVALLEVEALERVLLEALG</sequence>
<comment type="function">
    <text evidence="1">Catalyzes the hydrolysis of N-succinyl-L,L-diaminopimelic acid (SDAP), forming succinate and LL-2,6-diaminopimelate (DAP), an intermediate involved in the bacterial biosynthesis of lysine and meso-diaminopimelic acid, an essential component of bacterial cell walls.</text>
</comment>
<comment type="catalytic activity">
    <reaction evidence="1">
        <text>N-succinyl-(2S,6S)-2,6-diaminopimelate + H2O = (2S,6S)-2,6-diaminopimelate + succinate</text>
        <dbReference type="Rhea" id="RHEA:22608"/>
        <dbReference type="ChEBI" id="CHEBI:15377"/>
        <dbReference type="ChEBI" id="CHEBI:30031"/>
        <dbReference type="ChEBI" id="CHEBI:57609"/>
        <dbReference type="ChEBI" id="CHEBI:58087"/>
        <dbReference type="EC" id="3.5.1.18"/>
    </reaction>
</comment>
<comment type="cofactor">
    <cofactor evidence="1">
        <name>Zn(2+)</name>
        <dbReference type="ChEBI" id="CHEBI:29105"/>
    </cofactor>
    <cofactor evidence="1">
        <name>Co(2+)</name>
        <dbReference type="ChEBI" id="CHEBI:48828"/>
    </cofactor>
    <text evidence="1">Binds 2 Zn(2+) or Co(2+) ions per subunit.</text>
</comment>
<comment type="pathway">
    <text evidence="1">Amino-acid biosynthesis; L-lysine biosynthesis via DAP pathway; LL-2,6-diaminopimelate from (S)-tetrahydrodipicolinate (succinylase route): step 3/3.</text>
</comment>
<comment type="subunit">
    <text evidence="1">Homodimer.</text>
</comment>
<comment type="similarity">
    <text evidence="1">Belongs to the peptidase M20A family. DapE subfamily.</text>
</comment>
<proteinExistence type="inferred from homology"/>
<organism>
    <name type="scientific">Wolinella succinogenes (strain ATCC 29543 / DSM 1740 / CCUG 13145 / JCM 31913 / LMG 7466 / NCTC 11488 / FDC 602W)</name>
    <name type="common">Vibrio succinogenes</name>
    <dbReference type="NCBI Taxonomy" id="273121"/>
    <lineage>
        <taxon>Bacteria</taxon>
        <taxon>Pseudomonadati</taxon>
        <taxon>Campylobacterota</taxon>
        <taxon>Epsilonproteobacteria</taxon>
        <taxon>Campylobacterales</taxon>
        <taxon>Helicobacteraceae</taxon>
        <taxon>Wolinella</taxon>
    </lineage>
</organism>
<dbReference type="EC" id="3.5.1.18" evidence="1"/>
<dbReference type="EMBL" id="BX571658">
    <property type="protein sequence ID" value="CAE09720.1"/>
    <property type="molecule type" value="Genomic_DNA"/>
</dbReference>
<dbReference type="RefSeq" id="WP_011138520.1">
    <property type="nucleotide sequence ID" value="NC_005090.1"/>
</dbReference>
<dbReference type="SMR" id="Q7MSC2"/>
<dbReference type="STRING" id="273121.WS0588"/>
<dbReference type="KEGG" id="wsu:WS0588"/>
<dbReference type="eggNOG" id="COG0624">
    <property type="taxonomic scope" value="Bacteria"/>
</dbReference>
<dbReference type="HOGENOM" id="CLU_021802_4_0_7"/>
<dbReference type="UniPathway" id="UPA00034">
    <property type="reaction ID" value="UER00021"/>
</dbReference>
<dbReference type="Proteomes" id="UP000000422">
    <property type="component" value="Chromosome"/>
</dbReference>
<dbReference type="GO" id="GO:0008777">
    <property type="term" value="F:acetylornithine deacetylase activity"/>
    <property type="evidence" value="ECO:0007669"/>
    <property type="project" value="TreeGrafter"/>
</dbReference>
<dbReference type="GO" id="GO:0046872">
    <property type="term" value="F:metal ion binding"/>
    <property type="evidence" value="ECO:0007669"/>
    <property type="project" value="UniProtKB-KW"/>
</dbReference>
<dbReference type="GO" id="GO:0009014">
    <property type="term" value="F:succinyl-diaminopimelate desuccinylase activity"/>
    <property type="evidence" value="ECO:0007669"/>
    <property type="project" value="UniProtKB-EC"/>
</dbReference>
<dbReference type="GO" id="GO:0019877">
    <property type="term" value="P:diaminopimelate biosynthetic process"/>
    <property type="evidence" value="ECO:0007669"/>
    <property type="project" value="UniProtKB-KW"/>
</dbReference>
<dbReference type="GO" id="GO:0006526">
    <property type="term" value="P:L-arginine biosynthetic process"/>
    <property type="evidence" value="ECO:0007669"/>
    <property type="project" value="TreeGrafter"/>
</dbReference>
<dbReference type="GO" id="GO:0009089">
    <property type="term" value="P:lysine biosynthetic process via diaminopimelate"/>
    <property type="evidence" value="ECO:0007669"/>
    <property type="project" value="UniProtKB-UniPathway"/>
</dbReference>
<dbReference type="CDD" id="cd03891">
    <property type="entry name" value="M20_DapE_proteobac"/>
    <property type="match status" value="1"/>
</dbReference>
<dbReference type="Gene3D" id="3.30.70.360">
    <property type="match status" value="1"/>
</dbReference>
<dbReference type="Gene3D" id="3.40.630.10">
    <property type="entry name" value="Zn peptidases"/>
    <property type="match status" value="1"/>
</dbReference>
<dbReference type="HAMAP" id="MF_01690">
    <property type="entry name" value="DapE"/>
    <property type="match status" value="1"/>
</dbReference>
<dbReference type="InterPro" id="IPR036264">
    <property type="entry name" value="Bact_exopeptidase_dim_dom"/>
</dbReference>
<dbReference type="InterPro" id="IPR005941">
    <property type="entry name" value="DapE_proteobac"/>
</dbReference>
<dbReference type="InterPro" id="IPR002933">
    <property type="entry name" value="Peptidase_M20"/>
</dbReference>
<dbReference type="InterPro" id="IPR011650">
    <property type="entry name" value="Peptidase_M20_dimer"/>
</dbReference>
<dbReference type="InterPro" id="IPR050072">
    <property type="entry name" value="Peptidase_M20A"/>
</dbReference>
<dbReference type="NCBIfam" id="TIGR01246">
    <property type="entry name" value="dapE_proteo"/>
    <property type="match status" value="1"/>
</dbReference>
<dbReference type="NCBIfam" id="NF009557">
    <property type="entry name" value="PRK13009.1"/>
    <property type="match status" value="1"/>
</dbReference>
<dbReference type="PANTHER" id="PTHR43808">
    <property type="entry name" value="ACETYLORNITHINE DEACETYLASE"/>
    <property type="match status" value="1"/>
</dbReference>
<dbReference type="PANTHER" id="PTHR43808:SF31">
    <property type="entry name" value="N-ACETYL-L-CITRULLINE DEACETYLASE"/>
    <property type="match status" value="1"/>
</dbReference>
<dbReference type="Pfam" id="PF07687">
    <property type="entry name" value="M20_dimer"/>
    <property type="match status" value="1"/>
</dbReference>
<dbReference type="Pfam" id="PF01546">
    <property type="entry name" value="Peptidase_M20"/>
    <property type="match status" value="1"/>
</dbReference>
<dbReference type="SUPFAM" id="SSF55031">
    <property type="entry name" value="Bacterial exopeptidase dimerisation domain"/>
    <property type="match status" value="1"/>
</dbReference>
<dbReference type="SUPFAM" id="SSF53187">
    <property type="entry name" value="Zn-dependent exopeptidases"/>
    <property type="match status" value="1"/>
</dbReference>
<dbReference type="PROSITE" id="PS00759">
    <property type="entry name" value="ARGE_DAPE_CPG2_2"/>
    <property type="match status" value="1"/>
</dbReference>
<protein>
    <recommendedName>
        <fullName evidence="1">Succinyl-diaminopimelate desuccinylase</fullName>
        <shortName evidence="1">SDAP desuccinylase</shortName>
        <ecNumber evidence="1">3.5.1.18</ecNumber>
    </recommendedName>
    <alternativeName>
        <fullName evidence="1">N-succinyl-LL-2,6-diaminoheptanedioate amidohydrolase</fullName>
    </alternativeName>
</protein>
<keyword id="KW-0028">Amino-acid biosynthesis</keyword>
<keyword id="KW-0170">Cobalt</keyword>
<keyword id="KW-0220">Diaminopimelate biosynthesis</keyword>
<keyword id="KW-0378">Hydrolase</keyword>
<keyword id="KW-0457">Lysine biosynthesis</keyword>
<keyword id="KW-0479">Metal-binding</keyword>
<keyword id="KW-1185">Reference proteome</keyword>
<keyword id="KW-0862">Zinc</keyword>
<gene>
    <name evidence="1" type="primary">dapE</name>
    <name type="ordered locus">WS0588</name>
</gene>